<protein>
    <recommendedName>
        <fullName evidence="1">Small ribosomal subunit biogenesis GTPase RsgA</fullName>
        <ecNumber evidence="1">3.6.1.-</ecNumber>
    </recommendedName>
</protein>
<gene>
    <name evidence="1" type="primary">rsgA</name>
    <name type="ordered locus">Bphyt_2970</name>
</gene>
<reference key="1">
    <citation type="journal article" date="2011" name="J. Bacteriol.">
        <title>Complete genome sequence of the plant growth-promoting endophyte Burkholderia phytofirmans strain PsJN.</title>
        <authorList>
            <person name="Weilharter A."/>
            <person name="Mitter B."/>
            <person name="Shin M.V."/>
            <person name="Chain P.S."/>
            <person name="Nowak J."/>
            <person name="Sessitsch A."/>
        </authorList>
    </citation>
    <scope>NUCLEOTIDE SEQUENCE [LARGE SCALE GENOMIC DNA]</scope>
    <source>
        <strain>DSM 17436 / LMG 22146 / PsJN</strain>
    </source>
</reference>
<dbReference type="EC" id="3.6.1.-" evidence="1"/>
<dbReference type="EMBL" id="CP001052">
    <property type="protein sequence ID" value="ACD17364.1"/>
    <property type="molecule type" value="Genomic_DNA"/>
</dbReference>
<dbReference type="RefSeq" id="WP_012433944.1">
    <property type="nucleotide sequence ID" value="NC_010681.1"/>
</dbReference>
<dbReference type="SMR" id="B2T600"/>
<dbReference type="STRING" id="398527.Bphyt_2970"/>
<dbReference type="GeneID" id="97307989"/>
<dbReference type="KEGG" id="bpy:Bphyt_2970"/>
<dbReference type="eggNOG" id="COG1162">
    <property type="taxonomic scope" value="Bacteria"/>
</dbReference>
<dbReference type="HOGENOM" id="CLU_033617_2_0_4"/>
<dbReference type="OrthoDB" id="9809485at2"/>
<dbReference type="Proteomes" id="UP000001739">
    <property type="component" value="Chromosome 1"/>
</dbReference>
<dbReference type="GO" id="GO:0005737">
    <property type="term" value="C:cytoplasm"/>
    <property type="evidence" value="ECO:0007669"/>
    <property type="project" value="UniProtKB-SubCell"/>
</dbReference>
<dbReference type="GO" id="GO:0005525">
    <property type="term" value="F:GTP binding"/>
    <property type="evidence" value="ECO:0007669"/>
    <property type="project" value="UniProtKB-UniRule"/>
</dbReference>
<dbReference type="GO" id="GO:0003924">
    <property type="term" value="F:GTPase activity"/>
    <property type="evidence" value="ECO:0007669"/>
    <property type="project" value="UniProtKB-UniRule"/>
</dbReference>
<dbReference type="GO" id="GO:0046872">
    <property type="term" value="F:metal ion binding"/>
    <property type="evidence" value="ECO:0007669"/>
    <property type="project" value="UniProtKB-KW"/>
</dbReference>
<dbReference type="GO" id="GO:0019843">
    <property type="term" value="F:rRNA binding"/>
    <property type="evidence" value="ECO:0007669"/>
    <property type="project" value="UniProtKB-KW"/>
</dbReference>
<dbReference type="GO" id="GO:0042274">
    <property type="term" value="P:ribosomal small subunit biogenesis"/>
    <property type="evidence" value="ECO:0007669"/>
    <property type="project" value="UniProtKB-UniRule"/>
</dbReference>
<dbReference type="CDD" id="cd04466">
    <property type="entry name" value="S1_YloQ_GTPase"/>
    <property type="match status" value="1"/>
</dbReference>
<dbReference type="CDD" id="cd01854">
    <property type="entry name" value="YjeQ_EngC"/>
    <property type="match status" value="1"/>
</dbReference>
<dbReference type="Gene3D" id="2.40.50.140">
    <property type="entry name" value="Nucleic acid-binding proteins"/>
    <property type="match status" value="1"/>
</dbReference>
<dbReference type="Gene3D" id="3.40.50.300">
    <property type="entry name" value="P-loop containing nucleotide triphosphate hydrolases"/>
    <property type="match status" value="1"/>
</dbReference>
<dbReference type="Gene3D" id="1.10.40.50">
    <property type="entry name" value="Probable gtpase engc, domain 3"/>
    <property type="match status" value="1"/>
</dbReference>
<dbReference type="HAMAP" id="MF_01820">
    <property type="entry name" value="GTPase_RsgA"/>
    <property type="match status" value="1"/>
</dbReference>
<dbReference type="InterPro" id="IPR030378">
    <property type="entry name" value="G_CP_dom"/>
</dbReference>
<dbReference type="InterPro" id="IPR012340">
    <property type="entry name" value="NA-bd_OB-fold"/>
</dbReference>
<dbReference type="InterPro" id="IPR027417">
    <property type="entry name" value="P-loop_NTPase"/>
</dbReference>
<dbReference type="InterPro" id="IPR004881">
    <property type="entry name" value="Ribosome_biogen_GTPase_RsgA"/>
</dbReference>
<dbReference type="InterPro" id="IPR010914">
    <property type="entry name" value="RsgA_GTPase_dom"/>
</dbReference>
<dbReference type="InterPro" id="IPR031944">
    <property type="entry name" value="RsgA_N"/>
</dbReference>
<dbReference type="NCBIfam" id="TIGR00157">
    <property type="entry name" value="ribosome small subunit-dependent GTPase A"/>
    <property type="match status" value="1"/>
</dbReference>
<dbReference type="PANTHER" id="PTHR32120">
    <property type="entry name" value="SMALL RIBOSOMAL SUBUNIT BIOGENESIS GTPASE RSGA"/>
    <property type="match status" value="1"/>
</dbReference>
<dbReference type="PANTHER" id="PTHR32120:SF11">
    <property type="entry name" value="SMALL RIBOSOMAL SUBUNIT BIOGENESIS GTPASE RSGA 1, MITOCHONDRIAL-RELATED"/>
    <property type="match status" value="1"/>
</dbReference>
<dbReference type="Pfam" id="PF03193">
    <property type="entry name" value="RsgA_GTPase"/>
    <property type="match status" value="1"/>
</dbReference>
<dbReference type="SUPFAM" id="SSF50249">
    <property type="entry name" value="Nucleic acid-binding proteins"/>
    <property type="match status" value="1"/>
</dbReference>
<dbReference type="SUPFAM" id="SSF52540">
    <property type="entry name" value="P-loop containing nucleoside triphosphate hydrolases"/>
    <property type="match status" value="1"/>
</dbReference>
<dbReference type="PROSITE" id="PS50936">
    <property type="entry name" value="ENGC_GTPASE"/>
    <property type="match status" value="1"/>
</dbReference>
<dbReference type="PROSITE" id="PS51721">
    <property type="entry name" value="G_CP"/>
    <property type="match status" value="1"/>
</dbReference>
<keyword id="KW-0963">Cytoplasm</keyword>
<keyword id="KW-0342">GTP-binding</keyword>
<keyword id="KW-0378">Hydrolase</keyword>
<keyword id="KW-0479">Metal-binding</keyword>
<keyword id="KW-0547">Nucleotide-binding</keyword>
<keyword id="KW-0690">Ribosome biogenesis</keyword>
<keyword id="KW-0694">RNA-binding</keyword>
<keyword id="KW-0699">rRNA-binding</keyword>
<keyword id="KW-0862">Zinc</keyword>
<accession>B2T600</accession>
<organism>
    <name type="scientific">Paraburkholderia phytofirmans (strain DSM 17436 / LMG 22146 / PsJN)</name>
    <name type="common">Burkholderia phytofirmans</name>
    <dbReference type="NCBI Taxonomy" id="398527"/>
    <lineage>
        <taxon>Bacteria</taxon>
        <taxon>Pseudomonadati</taxon>
        <taxon>Pseudomonadota</taxon>
        <taxon>Betaproteobacteria</taxon>
        <taxon>Burkholderiales</taxon>
        <taxon>Burkholderiaceae</taxon>
        <taxon>Paraburkholderia</taxon>
    </lineage>
</organism>
<sequence length="316" mass="34566">MSGRSPKAPRAPSSTRVGGLVVAAHGRHYLVAPDDGGAMLQCFPRGKRSEVAVGDRVVYELASADQGVIVEIGERRNLLYRSDQYKSKLFAANLDQLLVVLATEPHFSEDLLGRALVAAEANELKPLIVLNKTDVTDALEGARKRLEPYRALGYTVVEVSIKMQPEAARAALIEHLQGHSTLLLGQSGMGKSTLVNLLIPDAEVATREISTALNSGRHTTTFTRLYPLPDSADGEGGALIDSPGFQEFGLHHLTEGRLERAFPEFRPLLPNCRFYNCHHLQEPGCAILEAVADGRIRRERHALYAQLVHEASQIVR</sequence>
<evidence type="ECO:0000255" key="1">
    <source>
        <dbReference type="HAMAP-Rule" id="MF_01820"/>
    </source>
</evidence>
<evidence type="ECO:0000255" key="2">
    <source>
        <dbReference type="PROSITE-ProRule" id="PRU01058"/>
    </source>
</evidence>
<comment type="function">
    <text evidence="1">One of several proteins that assist in the late maturation steps of the functional core of the 30S ribosomal subunit. Helps release RbfA from mature subunits. May play a role in the assembly of ribosomal proteins into the subunit. Circularly permuted GTPase that catalyzes slow GTP hydrolysis, GTPase activity is stimulated by the 30S ribosomal subunit.</text>
</comment>
<comment type="cofactor">
    <cofactor evidence="1">
        <name>Zn(2+)</name>
        <dbReference type="ChEBI" id="CHEBI:29105"/>
    </cofactor>
    <text evidence="1">Binds 1 zinc ion per subunit.</text>
</comment>
<comment type="subunit">
    <text evidence="1">Monomer. Associates with 30S ribosomal subunit, binds 16S rRNA.</text>
</comment>
<comment type="subcellular location">
    <subcellularLocation>
        <location evidence="1">Cytoplasm</location>
    </subcellularLocation>
</comment>
<comment type="similarity">
    <text evidence="1">Belongs to the TRAFAC class YlqF/YawG GTPase family. RsgA subfamily.</text>
</comment>
<name>RSGA_PARPJ</name>
<feature type="chain" id="PRO_1000216035" description="Small ribosomal subunit biogenesis GTPase RsgA">
    <location>
        <begin position="1"/>
        <end position="316"/>
    </location>
</feature>
<feature type="domain" description="CP-type G" evidence="2">
    <location>
        <begin position="83"/>
        <end position="248"/>
    </location>
</feature>
<feature type="binding site" evidence="1">
    <location>
        <begin position="131"/>
        <end position="134"/>
    </location>
    <ligand>
        <name>GTP</name>
        <dbReference type="ChEBI" id="CHEBI:37565"/>
    </ligand>
</feature>
<feature type="binding site" evidence="1">
    <location>
        <begin position="185"/>
        <end position="193"/>
    </location>
    <ligand>
        <name>GTP</name>
        <dbReference type="ChEBI" id="CHEBI:37565"/>
    </ligand>
</feature>
<feature type="binding site" evidence="1">
    <location>
        <position position="272"/>
    </location>
    <ligand>
        <name>Zn(2+)</name>
        <dbReference type="ChEBI" id="CHEBI:29105"/>
    </ligand>
</feature>
<feature type="binding site" evidence="1">
    <location>
        <position position="277"/>
    </location>
    <ligand>
        <name>Zn(2+)</name>
        <dbReference type="ChEBI" id="CHEBI:29105"/>
    </ligand>
</feature>
<feature type="binding site" evidence="1">
    <location>
        <position position="279"/>
    </location>
    <ligand>
        <name>Zn(2+)</name>
        <dbReference type="ChEBI" id="CHEBI:29105"/>
    </ligand>
</feature>
<feature type="binding site" evidence="1">
    <location>
        <position position="285"/>
    </location>
    <ligand>
        <name>Zn(2+)</name>
        <dbReference type="ChEBI" id="CHEBI:29105"/>
    </ligand>
</feature>
<proteinExistence type="inferred from homology"/>